<accession>C3L7X5</accession>
<proteinExistence type="inferred from homology"/>
<feature type="chain" id="PRO_1000200566" description="UvrABC system protein C">
    <location>
        <begin position="1"/>
        <end position="594"/>
    </location>
</feature>
<feature type="domain" description="GIY-YIG" evidence="1">
    <location>
        <begin position="14"/>
        <end position="91"/>
    </location>
</feature>
<feature type="domain" description="UVR" evidence="1">
    <location>
        <begin position="196"/>
        <end position="231"/>
    </location>
</feature>
<evidence type="ECO:0000255" key="1">
    <source>
        <dbReference type="HAMAP-Rule" id="MF_00203"/>
    </source>
</evidence>
<name>UVRC_BACAC</name>
<comment type="function">
    <text evidence="1">The UvrABC repair system catalyzes the recognition and processing of DNA lesions. UvrC both incises the 5' and 3' sides of the lesion. The N-terminal half is responsible for the 3' incision and the C-terminal half is responsible for the 5' incision.</text>
</comment>
<comment type="subunit">
    <text evidence="1">Interacts with UvrB in an incision complex.</text>
</comment>
<comment type="subcellular location">
    <subcellularLocation>
        <location evidence="1">Cytoplasm</location>
    </subcellularLocation>
</comment>
<comment type="similarity">
    <text evidence="1">Belongs to the UvrC family.</text>
</comment>
<dbReference type="EMBL" id="CP001215">
    <property type="protein sequence ID" value="ACP15542.1"/>
    <property type="molecule type" value="Genomic_DNA"/>
</dbReference>
<dbReference type="RefSeq" id="WP_000544304.1">
    <property type="nucleotide sequence ID" value="NC_012581.1"/>
</dbReference>
<dbReference type="SMR" id="C3L7X5"/>
<dbReference type="GeneID" id="45024392"/>
<dbReference type="KEGG" id="bah:BAMEG_4791"/>
<dbReference type="HOGENOM" id="CLU_014841_3_2_9"/>
<dbReference type="GO" id="GO:0005737">
    <property type="term" value="C:cytoplasm"/>
    <property type="evidence" value="ECO:0007669"/>
    <property type="project" value="UniProtKB-SubCell"/>
</dbReference>
<dbReference type="GO" id="GO:0009380">
    <property type="term" value="C:excinuclease repair complex"/>
    <property type="evidence" value="ECO:0007669"/>
    <property type="project" value="InterPro"/>
</dbReference>
<dbReference type="GO" id="GO:0003677">
    <property type="term" value="F:DNA binding"/>
    <property type="evidence" value="ECO:0007669"/>
    <property type="project" value="UniProtKB-UniRule"/>
</dbReference>
<dbReference type="GO" id="GO:0009381">
    <property type="term" value="F:excinuclease ABC activity"/>
    <property type="evidence" value="ECO:0007669"/>
    <property type="project" value="UniProtKB-UniRule"/>
</dbReference>
<dbReference type="GO" id="GO:0006289">
    <property type="term" value="P:nucleotide-excision repair"/>
    <property type="evidence" value="ECO:0007669"/>
    <property type="project" value="UniProtKB-UniRule"/>
</dbReference>
<dbReference type="GO" id="GO:0009432">
    <property type="term" value="P:SOS response"/>
    <property type="evidence" value="ECO:0007669"/>
    <property type="project" value="UniProtKB-UniRule"/>
</dbReference>
<dbReference type="CDD" id="cd10434">
    <property type="entry name" value="GIY-YIG_UvrC_Cho"/>
    <property type="match status" value="1"/>
</dbReference>
<dbReference type="FunFam" id="1.10.150.20:FF:000005">
    <property type="entry name" value="UvrABC system protein C"/>
    <property type="match status" value="1"/>
</dbReference>
<dbReference type="FunFam" id="3.30.420.340:FF:000002">
    <property type="entry name" value="UvrABC system protein C"/>
    <property type="match status" value="1"/>
</dbReference>
<dbReference type="FunFam" id="3.40.1440.10:FF:000001">
    <property type="entry name" value="UvrABC system protein C"/>
    <property type="match status" value="1"/>
</dbReference>
<dbReference type="FunFam" id="4.10.860.10:FF:000002">
    <property type="entry name" value="UvrABC system protein C"/>
    <property type="match status" value="1"/>
</dbReference>
<dbReference type="Gene3D" id="1.10.150.20">
    <property type="entry name" value="5' to 3' exonuclease, C-terminal subdomain"/>
    <property type="match status" value="1"/>
</dbReference>
<dbReference type="Gene3D" id="3.40.1440.10">
    <property type="entry name" value="GIY-YIG endonuclease"/>
    <property type="match status" value="1"/>
</dbReference>
<dbReference type="Gene3D" id="4.10.860.10">
    <property type="entry name" value="UVR domain"/>
    <property type="match status" value="1"/>
</dbReference>
<dbReference type="Gene3D" id="3.30.420.340">
    <property type="entry name" value="UvrC, RNAse H endonuclease domain"/>
    <property type="match status" value="1"/>
</dbReference>
<dbReference type="HAMAP" id="MF_00203">
    <property type="entry name" value="UvrC"/>
    <property type="match status" value="1"/>
</dbReference>
<dbReference type="InterPro" id="IPR000305">
    <property type="entry name" value="GIY-YIG_endonuc"/>
</dbReference>
<dbReference type="InterPro" id="IPR035901">
    <property type="entry name" value="GIY-YIG_endonuc_sf"/>
</dbReference>
<dbReference type="InterPro" id="IPR047296">
    <property type="entry name" value="GIY-YIG_UvrC_Cho"/>
</dbReference>
<dbReference type="InterPro" id="IPR010994">
    <property type="entry name" value="RuvA_2-like"/>
</dbReference>
<dbReference type="InterPro" id="IPR001943">
    <property type="entry name" value="UVR_dom"/>
</dbReference>
<dbReference type="InterPro" id="IPR036876">
    <property type="entry name" value="UVR_dom_sf"/>
</dbReference>
<dbReference type="InterPro" id="IPR050066">
    <property type="entry name" value="UvrABC_protein_C"/>
</dbReference>
<dbReference type="InterPro" id="IPR004791">
    <property type="entry name" value="UvrC"/>
</dbReference>
<dbReference type="InterPro" id="IPR001162">
    <property type="entry name" value="UvrC_RNase_H_dom"/>
</dbReference>
<dbReference type="InterPro" id="IPR038476">
    <property type="entry name" value="UvrC_RNase_H_dom_sf"/>
</dbReference>
<dbReference type="NCBIfam" id="NF001824">
    <property type="entry name" value="PRK00558.1-5"/>
    <property type="match status" value="1"/>
</dbReference>
<dbReference type="NCBIfam" id="TIGR00194">
    <property type="entry name" value="uvrC"/>
    <property type="match status" value="1"/>
</dbReference>
<dbReference type="PANTHER" id="PTHR30562:SF1">
    <property type="entry name" value="UVRABC SYSTEM PROTEIN C"/>
    <property type="match status" value="1"/>
</dbReference>
<dbReference type="PANTHER" id="PTHR30562">
    <property type="entry name" value="UVRC/OXIDOREDUCTASE"/>
    <property type="match status" value="1"/>
</dbReference>
<dbReference type="Pfam" id="PF01541">
    <property type="entry name" value="GIY-YIG"/>
    <property type="match status" value="1"/>
</dbReference>
<dbReference type="Pfam" id="PF02151">
    <property type="entry name" value="UVR"/>
    <property type="match status" value="1"/>
</dbReference>
<dbReference type="Pfam" id="PF22920">
    <property type="entry name" value="UvrC_RNaseH"/>
    <property type="match status" value="1"/>
</dbReference>
<dbReference type="Pfam" id="PF08459">
    <property type="entry name" value="UvrC_RNaseH_dom"/>
    <property type="match status" value="1"/>
</dbReference>
<dbReference type="SMART" id="SM00465">
    <property type="entry name" value="GIYc"/>
    <property type="match status" value="1"/>
</dbReference>
<dbReference type="SUPFAM" id="SSF46600">
    <property type="entry name" value="C-terminal UvrC-binding domain of UvrB"/>
    <property type="match status" value="1"/>
</dbReference>
<dbReference type="SUPFAM" id="SSF82771">
    <property type="entry name" value="GIY-YIG endonuclease"/>
    <property type="match status" value="1"/>
</dbReference>
<dbReference type="SUPFAM" id="SSF47781">
    <property type="entry name" value="RuvA domain 2-like"/>
    <property type="match status" value="1"/>
</dbReference>
<dbReference type="PROSITE" id="PS50164">
    <property type="entry name" value="GIY_YIG"/>
    <property type="match status" value="1"/>
</dbReference>
<dbReference type="PROSITE" id="PS50151">
    <property type="entry name" value="UVR"/>
    <property type="match status" value="1"/>
</dbReference>
<dbReference type="PROSITE" id="PS50165">
    <property type="entry name" value="UVRC"/>
    <property type="match status" value="1"/>
</dbReference>
<reference key="1">
    <citation type="submission" date="2008-10" db="EMBL/GenBank/DDBJ databases">
        <title>Genome sequence of Bacillus anthracis str. CDC 684.</title>
        <authorList>
            <person name="Dodson R.J."/>
            <person name="Munk A.C."/>
            <person name="Brettin T."/>
            <person name="Bruce D."/>
            <person name="Detter C."/>
            <person name="Tapia R."/>
            <person name="Han C."/>
            <person name="Sutton G."/>
            <person name="Sims D."/>
        </authorList>
    </citation>
    <scope>NUCLEOTIDE SEQUENCE [LARGE SCALE GENOMIC DNA]</scope>
    <source>
        <strain>CDC 684 / NRRL 3495</strain>
    </source>
</reference>
<organism>
    <name type="scientific">Bacillus anthracis (strain CDC 684 / NRRL 3495)</name>
    <dbReference type="NCBI Taxonomy" id="568206"/>
    <lineage>
        <taxon>Bacteria</taxon>
        <taxon>Bacillati</taxon>
        <taxon>Bacillota</taxon>
        <taxon>Bacilli</taxon>
        <taxon>Bacillales</taxon>
        <taxon>Bacillaceae</taxon>
        <taxon>Bacillus</taxon>
        <taxon>Bacillus cereus group</taxon>
    </lineage>
</organism>
<sequence length="594" mass="68398">MHEHLKEKLAILPDQPGCYLMKDRQGTVIYVGKAKVLKNRVRSYFTGSHDGKTLRLVGEIVDFEYIVTSSNLEALILELNLIKKHDPKYNIQLKDDKTYPFIKITAEKQPRLLITRNVKKDKGKYFGPYPNAQSAHETKKLLDRMYPLRKCSNMPDKVCLYYHMGQCLAPCVKEVTEEQNKEIVDEIIKFLNGGHKEVRSELETKMYEASEKLEFERAKELRDQIAHIDAIMEKQKMIMSDLVDRDVFGYAVDKGWMCVQVFFVRKGKLIERDVSMFPIYDEPEEGFLTFIGQFYENSSHFKPKEIVVPGSIDSELVERFLEVEATQPKRGKKKDLVELANKNAKIALEEKFYLIERDEERTIKAVENLGKQLGIETPYRIEAFDNSNIQGTNPVSAMIAFIDGKPAKKEYRKYKIKTVQGPDDYESMREVVRRRYTRALKEGLPLPDLIIIDGGKGHLAAASDVLENELGLYIPMAGLVKDDKHKTSHLIIGDPPEPVMLERNSQEFYLLQRVQDEVHRFAITFHRQLHGKSVIQSALDDIPGIGDKRKKVLLKHFGSLKKMKEASIEEFVEAGMPKNVAETIYTYLTDKKTL</sequence>
<keyword id="KW-0963">Cytoplasm</keyword>
<keyword id="KW-0227">DNA damage</keyword>
<keyword id="KW-0228">DNA excision</keyword>
<keyword id="KW-0234">DNA repair</keyword>
<keyword id="KW-0267">Excision nuclease</keyword>
<keyword id="KW-0742">SOS response</keyword>
<gene>
    <name evidence="1" type="primary">uvrC</name>
    <name type="ordered locus">BAMEG_4791</name>
</gene>
<protein>
    <recommendedName>
        <fullName evidence="1">UvrABC system protein C</fullName>
        <shortName evidence="1">Protein UvrC</shortName>
    </recommendedName>
    <alternativeName>
        <fullName evidence="1">Excinuclease ABC subunit C</fullName>
    </alternativeName>
</protein>